<dbReference type="EMBL" id="EF067921">
    <property type="protein sequence ID" value="ABK20815.1"/>
    <property type="molecule type" value="Genomic_DNA"/>
</dbReference>
<dbReference type="RefSeq" id="YP_874592.1">
    <property type="nucleotide sequence ID" value="NC_008589.1"/>
</dbReference>
<dbReference type="SMR" id="A0T0Y0"/>
<dbReference type="FunCoup" id="A0T0Y0">
    <property type="interactions" value="6"/>
</dbReference>
<dbReference type="STRING" id="35128.A0T0Y0"/>
<dbReference type="GeneID" id="4524755"/>
<dbReference type="InParanoid" id="A0T0Y0"/>
<dbReference type="GO" id="GO:0009507">
    <property type="term" value="C:chloroplast"/>
    <property type="evidence" value="ECO:0007669"/>
    <property type="project" value="UniProtKB-SubCell"/>
</dbReference>
<dbReference type="GO" id="GO:0005762">
    <property type="term" value="C:mitochondrial large ribosomal subunit"/>
    <property type="evidence" value="ECO:0000318"/>
    <property type="project" value="GO_Central"/>
</dbReference>
<dbReference type="GO" id="GO:0019843">
    <property type="term" value="F:rRNA binding"/>
    <property type="evidence" value="ECO:0000318"/>
    <property type="project" value="GO_Central"/>
</dbReference>
<dbReference type="GO" id="GO:0003735">
    <property type="term" value="F:structural constituent of ribosome"/>
    <property type="evidence" value="ECO:0000318"/>
    <property type="project" value="GO_Central"/>
</dbReference>
<dbReference type="GO" id="GO:0032543">
    <property type="term" value="P:mitochondrial translation"/>
    <property type="evidence" value="ECO:0000318"/>
    <property type="project" value="GO_Central"/>
</dbReference>
<dbReference type="CDD" id="cd01433">
    <property type="entry name" value="Ribosomal_L16_L10e"/>
    <property type="match status" value="1"/>
</dbReference>
<dbReference type="FunFam" id="3.90.1170.10:FF:000001">
    <property type="entry name" value="50S ribosomal protein L16"/>
    <property type="match status" value="1"/>
</dbReference>
<dbReference type="Gene3D" id="3.90.1170.10">
    <property type="entry name" value="Ribosomal protein L10e/L16"/>
    <property type="match status" value="1"/>
</dbReference>
<dbReference type="HAMAP" id="MF_01342">
    <property type="entry name" value="Ribosomal_uL16"/>
    <property type="match status" value="1"/>
</dbReference>
<dbReference type="InterPro" id="IPR047873">
    <property type="entry name" value="Ribosomal_uL16"/>
</dbReference>
<dbReference type="InterPro" id="IPR000114">
    <property type="entry name" value="Ribosomal_uL16_bact-type"/>
</dbReference>
<dbReference type="InterPro" id="IPR020798">
    <property type="entry name" value="Ribosomal_uL16_CS"/>
</dbReference>
<dbReference type="InterPro" id="IPR016180">
    <property type="entry name" value="Ribosomal_uL16_dom"/>
</dbReference>
<dbReference type="InterPro" id="IPR036920">
    <property type="entry name" value="Ribosomal_uL16_sf"/>
</dbReference>
<dbReference type="NCBIfam" id="TIGR01164">
    <property type="entry name" value="rplP_bact"/>
    <property type="match status" value="1"/>
</dbReference>
<dbReference type="PANTHER" id="PTHR12220">
    <property type="entry name" value="50S/60S RIBOSOMAL PROTEIN L16"/>
    <property type="match status" value="1"/>
</dbReference>
<dbReference type="PANTHER" id="PTHR12220:SF13">
    <property type="entry name" value="LARGE RIBOSOMAL SUBUNIT PROTEIN UL16M"/>
    <property type="match status" value="1"/>
</dbReference>
<dbReference type="Pfam" id="PF00252">
    <property type="entry name" value="Ribosomal_L16"/>
    <property type="match status" value="1"/>
</dbReference>
<dbReference type="PRINTS" id="PR00060">
    <property type="entry name" value="RIBOSOMALL16"/>
</dbReference>
<dbReference type="SUPFAM" id="SSF54686">
    <property type="entry name" value="Ribosomal protein L16p/L10e"/>
    <property type="match status" value="1"/>
</dbReference>
<dbReference type="PROSITE" id="PS00701">
    <property type="entry name" value="RIBOSOMAL_L16_2"/>
    <property type="match status" value="1"/>
</dbReference>
<accession>A0T0Y0</accession>
<keyword id="KW-0150">Chloroplast</keyword>
<keyword id="KW-0934">Plastid</keyword>
<keyword id="KW-0687">Ribonucleoprotein</keyword>
<keyword id="KW-0689">Ribosomal protein</keyword>
<evidence type="ECO:0000255" key="1">
    <source>
        <dbReference type="HAMAP-Rule" id="MF_01342"/>
    </source>
</evidence>
<evidence type="ECO:0000305" key="2"/>
<comment type="subunit">
    <text evidence="1">Part of the 50S ribosomal subunit.</text>
</comment>
<comment type="subcellular location">
    <subcellularLocation>
        <location>Plastid</location>
        <location>Chloroplast</location>
    </subcellularLocation>
</comment>
<comment type="similarity">
    <text evidence="1">Belongs to the universal ribosomal protein uL16 family.</text>
</comment>
<sequence>MLSPKRTKYRKYHRGRMRGKATRGNEVSFGKYGLQALEPSWITSRQIEATRRTITRYTKRGASLWIRIFPDKTVTARAAESRMGSGKGAVDYWVATVKPGTILFEISAVPEEVARAAFNLAAYKLPIKTKFIIRKDI</sequence>
<gene>
    <name evidence="1" type="primary">rpl16</name>
</gene>
<geneLocation type="chloroplast"/>
<proteinExistence type="inferred from homology"/>
<organism>
    <name type="scientific">Thalassiosira pseudonana</name>
    <name type="common">Marine diatom</name>
    <name type="synonym">Cyclotella nana</name>
    <dbReference type="NCBI Taxonomy" id="35128"/>
    <lineage>
        <taxon>Eukaryota</taxon>
        <taxon>Sar</taxon>
        <taxon>Stramenopiles</taxon>
        <taxon>Ochrophyta</taxon>
        <taxon>Bacillariophyta</taxon>
        <taxon>Coscinodiscophyceae</taxon>
        <taxon>Thalassiosirophycidae</taxon>
        <taxon>Thalassiosirales</taxon>
        <taxon>Thalassiosiraceae</taxon>
        <taxon>Thalassiosira</taxon>
    </lineage>
</organism>
<feature type="chain" id="PRO_0000276392" description="Large ribosomal subunit protein uL16c">
    <location>
        <begin position="1"/>
        <end position="137"/>
    </location>
</feature>
<reference key="1">
    <citation type="journal article" date="2007" name="Mol. Genet. Genomics">
        <title>Chloroplast genomes of the diatoms Phaeodactylum tricornutum and Thalassiosira pseudonana: comparison with other plastid genomes of the red lineage.</title>
        <authorList>
            <person name="Oudot-Le Secq M.-P."/>
            <person name="Grimwood J."/>
            <person name="Shapiro H."/>
            <person name="Armbrust E.V."/>
            <person name="Bowler C."/>
            <person name="Green B.R."/>
        </authorList>
    </citation>
    <scope>NUCLEOTIDE SEQUENCE [LARGE SCALE GENOMIC DNA]</scope>
    <source>
        <strain>CCMP1335 / NEPCC58 / CCAP 1085/12</strain>
    </source>
</reference>
<name>RK16_THAPS</name>
<protein>
    <recommendedName>
        <fullName evidence="1">Large ribosomal subunit protein uL16c</fullName>
    </recommendedName>
    <alternativeName>
        <fullName evidence="2">50S ribosomal protein L16, chloroplastic</fullName>
    </alternativeName>
</protein>